<dbReference type="EC" id="1.-.-.-" evidence="3 5"/>
<dbReference type="EMBL" id="BK008910">
    <property type="protein sequence ID" value="DAA64700.1"/>
    <property type="molecule type" value="Genomic_DNA"/>
</dbReference>
<dbReference type="EMBL" id="EQ962655">
    <property type="protein sequence ID" value="EED18000.1"/>
    <property type="molecule type" value="Genomic_DNA"/>
</dbReference>
<dbReference type="RefSeq" id="XP_002481992.1">
    <property type="nucleotide sequence ID" value="XM_002481947.1"/>
</dbReference>
<dbReference type="PDB" id="6NES">
    <property type="method" value="X-ray"/>
    <property type="resolution" value="1.75 A"/>
    <property type="chains" value="A/B=1-447"/>
</dbReference>
<dbReference type="PDB" id="6NET">
    <property type="method" value="X-ray"/>
    <property type="resolution" value="2.25 A"/>
    <property type="chains" value="A/B=1-447"/>
</dbReference>
<dbReference type="PDB" id="6NEU">
    <property type="method" value="X-ray"/>
    <property type="resolution" value="2.30 A"/>
    <property type="chains" value="A/B=1-447"/>
</dbReference>
<dbReference type="PDB" id="6NEV">
    <property type="method" value="X-ray"/>
    <property type="resolution" value="2.30 A"/>
    <property type="chains" value="A/B=1-447"/>
</dbReference>
<dbReference type="PDBsum" id="6NES"/>
<dbReference type="PDBsum" id="6NET"/>
<dbReference type="PDBsum" id="6NEU"/>
<dbReference type="PDBsum" id="6NEV"/>
<dbReference type="SMR" id="B8M9J8"/>
<dbReference type="STRING" id="441959.B8M9J8"/>
<dbReference type="GlyCosmos" id="B8M9J8">
    <property type="glycosylation" value="2 sites, No reported glycans"/>
</dbReference>
<dbReference type="GeneID" id="8105832"/>
<dbReference type="VEuPathDB" id="FungiDB:TSTA_117740"/>
<dbReference type="eggNOG" id="KOG2614">
    <property type="taxonomic scope" value="Eukaryota"/>
</dbReference>
<dbReference type="HOGENOM" id="CLU_009665_6_3_1"/>
<dbReference type="InParanoid" id="B8M9J8"/>
<dbReference type="OrthoDB" id="417877at2759"/>
<dbReference type="PhylomeDB" id="B8M9J8"/>
<dbReference type="BioCyc" id="MetaCyc:MONOMER-19387"/>
<dbReference type="SABIO-RK" id="B8M9J8"/>
<dbReference type="Proteomes" id="UP000001745">
    <property type="component" value="Unassembled WGS sequence"/>
</dbReference>
<dbReference type="GO" id="GO:0016020">
    <property type="term" value="C:membrane"/>
    <property type="evidence" value="ECO:0007669"/>
    <property type="project" value="UniProtKB-SubCell"/>
</dbReference>
<dbReference type="GO" id="GO:0071949">
    <property type="term" value="F:FAD binding"/>
    <property type="evidence" value="ECO:0007669"/>
    <property type="project" value="InterPro"/>
</dbReference>
<dbReference type="GO" id="GO:0004497">
    <property type="term" value="F:monooxygenase activity"/>
    <property type="evidence" value="ECO:0007669"/>
    <property type="project" value="UniProtKB-KW"/>
</dbReference>
<dbReference type="GO" id="GO:0044550">
    <property type="term" value="P:secondary metabolite biosynthetic process"/>
    <property type="evidence" value="ECO:0007669"/>
    <property type="project" value="TreeGrafter"/>
</dbReference>
<dbReference type="FunFam" id="3.50.50.60:FF:000153">
    <property type="entry name" value="Salicylate hydroxylase, putative"/>
    <property type="match status" value="1"/>
</dbReference>
<dbReference type="Gene3D" id="3.50.50.60">
    <property type="entry name" value="FAD/NAD(P)-binding domain"/>
    <property type="match status" value="1"/>
</dbReference>
<dbReference type="InterPro" id="IPR002938">
    <property type="entry name" value="FAD-bd"/>
</dbReference>
<dbReference type="InterPro" id="IPR036188">
    <property type="entry name" value="FAD/NAD-bd_sf"/>
</dbReference>
<dbReference type="InterPro" id="IPR051104">
    <property type="entry name" value="FAD_monoxygenase"/>
</dbReference>
<dbReference type="PANTHER" id="PTHR46720:SF3">
    <property type="entry name" value="FAD-BINDING DOMAIN-CONTAINING PROTEIN-RELATED"/>
    <property type="match status" value="1"/>
</dbReference>
<dbReference type="PANTHER" id="PTHR46720">
    <property type="entry name" value="HYDROXYLASE, PUTATIVE (AFU_ORTHOLOGUE AFUA_3G01460)-RELATED"/>
    <property type="match status" value="1"/>
</dbReference>
<dbReference type="Pfam" id="PF01494">
    <property type="entry name" value="FAD_binding_3"/>
    <property type="match status" value="1"/>
</dbReference>
<dbReference type="PRINTS" id="PR00420">
    <property type="entry name" value="RNGMNOXGNASE"/>
</dbReference>
<dbReference type="SUPFAM" id="SSF54373">
    <property type="entry name" value="FAD-linked reductases, C-terminal domain"/>
    <property type="match status" value="1"/>
</dbReference>
<dbReference type="SUPFAM" id="SSF51905">
    <property type="entry name" value="FAD/NAD(P)-binding domain"/>
    <property type="match status" value="1"/>
</dbReference>
<gene>
    <name evidence="6" type="primary">tropB</name>
    <name evidence="6" type="synonym">tsL1</name>
    <name type="ORF">TSTA_117740</name>
</gene>
<evidence type="ECO:0000255" key="1"/>
<evidence type="ECO:0000255" key="2">
    <source>
        <dbReference type="PROSITE-ProRule" id="PRU00498"/>
    </source>
</evidence>
<evidence type="ECO:0000269" key="3">
    <source>
    </source>
</evidence>
<evidence type="ECO:0000269" key="4">
    <source>
    </source>
</evidence>
<evidence type="ECO:0000269" key="5">
    <source>
    </source>
</evidence>
<evidence type="ECO:0000303" key="6">
    <source>
    </source>
</evidence>
<evidence type="ECO:0000305" key="7"/>
<evidence type="ECO:0000305" key="8">
    <source>
    </source>
</evidence>
<evidence type="ECO:0000312" key="9">
    <source>
        <dbReference type="PDB" id="6NET"/>
    </source>
</evidence>
<evidence type="ECO:0000312" key="10">
    <source>
        <dbReference type="PDB" id="6NEU"/>
    </source>
</evidence>
<evidence type="ECO:0007744" key="11">
    <source>
        <dbReference type="PDB" id="6NES"/>
    </source>
</evidence>
<evidence type="ECO:0007744" key="12">
    <source>
        <dbReference type="PDB" id="6NET"/>
    </source>
</evidence>
<evidence type="ECO:0007744" key="13">
    <source>
        <dbReference type="PDB" id="6NEU"/>
    </source>
</evidence>
<evidence type="ECO:0007744" key="14">
    <source>
        <dbReference type="PDB" id="6NEV"/>
    </source>
</evidence>
<evidence type="ECO:0007829" key="15">
    <source>
        <dbReference type="PDB" id="6NES"/>
    </source>
</evidence>
<evidence type="ECO:0007829" key="16">
    <source>
        <dbReference type="PDB" id="6NEU"/>
    </source>
</evidence>
<evidence type="ECO:0007829" key="17">
    <source>
        <dbReference type="PDB" id="6NEV"/>
    </source>
</evidence>
<reference key="1">
    <citation type="journal article" date="2012" name="Proc. Natl. Acad. Sci. U.S.A.">
        <title>Genetic, molecular, and biochemical basis of fungal tropolone biosynthesis.</title>
        <authorList>
            <person name="Davison J."/>
            <person name="al Fahad A."/>
            <person name="Cai M."/>
            <person name="Song Z."/>
            <person name="Yehia S.Y."/>
            <person name="Lazarus C.M."/>
            <person name="Bailey A.M."/>
            <person name="Simpson T.J."/>
            <person name="Cox R.J."/>
        </authorList>
    </citation>
    <scope>NUCLEOTIDE SEQUENCE [GENOMIC DNA]</scope>
    <scope>FUNCTION</scope>
    <scope>CATALYTIC ACTIVITY</scope>
    <scope>DISRUPTION PHENOTYPE</scope>
    <source>
        <strain>ATCC 10500 / CBS 375.48 / QM 6759 / NRRL 1006</strain>
    </source>
</reference>
<reference key="2">
    <citation type="journal article" date="2014" name="Angew. Chem. Int. Ed.">
        <title>The biosynthesis and catabolism of the maleic anhydride moiety of stipitatonic acid.</title>
        <authorList>
            <person name="al Fahad A."/>
            <person name="Abood A."/>
            <person name="Simpson T.J."/>
            <person name="Cox R.J."/>
        </authorList>
    </citation>
    <scope>NUCLEOTIDE SEQUENCE [GENOMIC DNA]</scope>
    <scope>FUNCTION</scope>
    <source>
        <strain>ATCC 10500 / CBS 375.48 / QM 6759 / NRRL 1006</strain>
    </source>
</reference>
<reference key="3">
    <citation type="journal article" date="2015" name="Genome Announc.">
        <title>Genome sequence of the AIDS-associated pathogen Penicillium marneffei (ATCC18224) and its near taxonomic relative Talaromyces stipitatus (ATCC10500).</title>
        <authorList>
            <person name="Nierman W.C."/>
            <person name="Fedorova-Abrams N.D."/>
            <person name="Andrianopoulos A."/>
        </authorList>
    </citation>
    <scope>NUCLEOTIDE SEQUENCE [LARGE SCALE GENOMIC DNA]</scope>
    <source>
        <strain>ATCC 10500 / CBS 375.48 / QM 6759 / NRRL 1006</strain>
    </source>
</reference>
<reference evidence="11 12 13 14" key="4">
    <citation type="journal article" date="2019" name="ACS Catal.">
        <title>Structural basis for selectivity in flavin-dependent monooxygenase-catalyzed oxidative dearomatization.</title>
        <authorList>
            <person name="Benitez A.R."/>
            <person name="Tweedy S."/>
            <person name="Baker Dockrey S.A."/>
            <person name="Lukowski A.L."/>
            <person name="Wymore T."/>
            <person name="Khare D."/>
            <person name="Brooks C.L. III"/>
            <person name="Palfey B.A."/>
            <person name="Smith J.L."/>
            <person name="Narayan A.R.H."/>
        </authorList>
    </citation>
    <scope>X-RAY CRYSTALLOGRAPHY (1.75 ANGSTROMS) IN COMPLEX WITH FAD</scope>
    <scope>COFACTOR</scope>
    <scope>FUNCTION</scope>
    <scope>CATALYTIC ACTIVITY</scope>
    <scope>ACTIVE SITE</scope>
    <scope>MUTAGENESIS OF ARG-206; HIS-235; TYR-239; HIS-330 AND HIS-331</scope>
    <scope>PATHWAY</scope>
</reference>
<sequence length="447" mass="49874">MPGSLIDTRQQPLSVGIVGGGIIGVILAAGLVRRGIDVKVFEQARGFREIGAGMAFTANAVRCMEMLDPAIVWALRSSGAVPISIGDHQAEARDYLRWVDGYHESSKRLYQLDAGIRGFEACRRDQFLEALVKVLPEGIVECQKRLQKIHEKNETEKVTLEFADGTFAHVDCVIGADGIRSRVRQHLFGEDSPYSHPHYSHKFAFRGLITMENAISALGEDKARTLNMHVGPNAHLIHYPVANETMVNIAAFVSDPEEWPDKLSLVGPATREEAMGYFANWNPGLRAVLGFMPENIDRWAMFDTYDYPAPFFSRGKICLVGDAAHAAVPHHGAGACIGIEDALCATVLLAEVFVSTRGKSSIVRNRAIAAAFGSFNAVRRVRAQWFVDSSRRVCDLYQQPEWADPQKRIKAENCFEEIKDRSHKIWHFDYNSMLQEAIEKYRHNMGS</sequence>
<comment type="function">
    <text evidence="3 4 5 8">FAD-dependent monooxygenase; part of the gene cluster that mediates the biosynthesis of the tropolone class of fungal maleic anhydrides (PubMed:22508998, PubMed:24863423, PubMed:31346489). Within the pathway, tropB catalyzes a synthetically challenging asymmetric oxidative dearomatization reaction to convert 3-methylorcinaldehyde into a hydroxycyclohexadione (PubMed:22508998, PubMed:24863423, PubMed:31346489). The pathway begins with the synthesis of 3-methylorcinaldehyde by the non-reducing polyketide synthase (PKS) tropA. 3-methylorcinaldehyde is the substrate for the FAD-dependent monooxygenase tropB to yield a dearomatized hydroxycyclohexadione. The 2-oxoglutarate-dependent dioxygenase tropC then performs the oxidative ring expansion to provide the first tropolone metabolite stipitaldehyde. Trop D converts stipitaldehyde into stipitacetal which is in turn converted to stipitalide by the short-chain dehydrogenase/reductase tropE. The next steps involve tropF, tropG, tropH, tropI and tropJ to form successive tropolone maleic anhydrides including stipitaldehydic, stipitatonic and stipitatic acids (Probable).</text>
</comment>
<comment type="cofactor">
    <cofactor evidence="5">
        <name>FAD</name>
        <dbReference type="ChEBI" id="CHEBI:57692"/>
    </cofactor>
</comment>
<comment type="biophysicochemical properties">
    <kinetics>
        <KM evidence="3">65.3 uM for NADH</KM>
        <KM evidence="3">158.2 uM for NADPH</KM>
    </kinetics>
</comment>
<comment type="pathway">
    <text evidence="3 5">Secondary metabolite biosynthesis.</text>
</comment>
<comment type="subcellular location">
    <subcellularLocation>
        <location>Membrane</location>
        <topology evidence="1">Single-pass membrane protein</topology>
    </subcellularLocation>
</comment>
<comment type="disruption phenotype">
    <text evidence="3">Impairs the production of tropolones but leads to the accumulation of the intermediate 3-methylorcinaldehyde (PubMed:22508998).</text>
</comment>
<comment type="similarity">
    <text evidence="7">Belongs to the paxM FAD-dependent monooxygenase family.</text>
</comment>
<feature type="chain" id="PRO_0000437128" description="FAD-dependent monooxygenase tropB">
    <location>
        <begin position="1"/>
        <end position="447"/>
    </location>
</feature>
<feature type="transmembrane region" description="Helical" evidence="1">
    <location>
        <begin position="12"/>
        <end position="32"/>
    </location>
</feature>
<feature type="active site" evidence="5">
    <location>
        <position position="206"/>
    </location>
</feature>
<feature type="active site" evidence="5">
    <location>
        <position position="239"/>
    </location>
</feature>
<feature type="binding site" evidence="5 9 10 11 14">
    <location>
        <position position="42"/>
    </location>
    <ligand>
        <name>FAD</name>
        <dbReference type="ChEBI" id="CHEBI:57692"/>
    </ligand>
</feature>
<feature type="binding site" evidence="5 9 10 11 14">
    <location>
        <position position="55"/>
    </location>
    <ligand>
        <name>FAD</name>
        <dbReference type="ChEBI" id="CHEBI:57692"/>
    </ligand>
</feature>
<feature type="binding site" evidence="5 9 10 11 14">
    <location>
        <position position="124"/>
    </location>
    <ligand>
        <name>FAD</name>
        <dbReference type="ChEBI" id="CHEBI:57692"/>
    </ligand>
</feature>
<feature type="binding site" evidence="5 9 10 11 14">
    <location>
        <position position="322"/>
    </location>
    <ligand>
        <name>FAD</name>
        <dbReference type="ChEBI" id="CHEBI:57692"/>
    </ligand>
</feature>
<feature type="binding site" evidence="5 11 14">
    <location>
        <position position="335"/>
    </location>
    <ligand>
        <name>FAD</name>
        <dbReference type="ChEBI" id="CHEBI:57692"/>
    </ligand>
</feature>
<feature type="glycosylation site" description="N-linked (GlcNAc...) asparagine" evidence="2">
    <location>
        <position position="153"/>
    </location>
</feature>
<feature type="glycosylation site" description="N-linked (GlcNAc...) asparagine" evidence="2">
    <location>
        <position position="243"/>
    </location>
</feature>
<feature type="mutagenesis site" description="Abolishes the catalytic activity." evidence="5">
    <original>R</original>
    <variation>E</variation>
    <variation>Q</variation>
    <location>
        <position position="206"/>
    </location>
</feature>
<feature type="mutagenesis site" description="Converts 10% of substrate to dearomatized product." evidence="5">
    <original>H</original>
    <variation>A</variation>
    <location>
        <position position="235"/>
    </location>
</feature>
<feature type="mutagenesis site" description="Abolishes the catalytic activity." evidence="5">
    <original>Y</original>
    <variation>F</variation>
    <location>
        <position position="239"/>
    </location>
</feature>
<feature type="mutagenesis site" description="Converts 11% of substrate to dearomatized product." evidence="5">
    <original>H</original>
    <variation>A</variation>
    <location>
        <position position="330"/>
    </location>
</feature>
<feature type="mutagenesis site" description="Converts 71% of substrate to dearomatized product." evidence="5">
    <original>H</original>
    <variation>A</variation>
    <location>
        <position position="331"/>
    </location>
</feature>
<feature type="strand" evidence="15">
    <location>
        <begin position="14"/>
        <end position="18"/>
    </location>
</feature>
<feature type="helix" evidence="15">
    <location>
        <begin position="22"/>
        <end position="32"/>
    </location>
</feature>
<feature type="turn" evidence="15">
    <location>
        <begin position="33"/>
        <end position="35"/>
    </location>
</feature>
<feature type="strand" evidence="15">
    <location>
        <begin position="37"/>
        <end position="46"/>
    </location>
</feature>
<feature type="strand" evidence="15">
    <location>
        <begin position="53"/>
        <end position="57"/>
    </location>
</feature>
<feature type="helix" evidence="15">
    <location>
        <begin position="58"/>
        <end position="67"/>
    </location>
</feature>
<feature type="helix" evidence="15">
    <location>
        <begin position="69"/>
        <end position="76"/>
    </location>
</feature>
<feature type="strand" evidence="15">
    <location>
        <begin position="93"/>
        <end position="100"/>
    </location>
</feature>
<feature type="strand" evidence="15">
    <location>
        <begin position="108"/>
        <end position="116"/>
    </location>
</feature>
<feature type="strand" evidence="15">
    <location>
        <begin position="118"/>
        <end position="123"/>
    </location>
</feature>
<feature type="helix" evidence="15">
    <location>
        <begin position="124"/>
        <end position="134"/>
    </location>
</feature>
<feature type="strand" evidence="15">
    <location>
        <begin position="139"/>
        <end position="143"/>
    </location>
</feature>
<feature type="strand" evidence="15">
    <location>
        <begin position="146"/>
        <end position="150"/>
    </location>
</feature>
<feature type="strand" evidence="15">
    <location>
        <begin position="158"/>
        <end position="162"/>
    </location>
</feature>
<feature type="strand" evidence="15">
    <location>
        <begin position="167"/>
        <end position="175"/>
    </location>
</feature>
<feature type="helix" evidence="15">
    <location>
        <begin position="182"/>
        <end position="188"/>
    </location>
</feature>
<feature type="helix" evidence="15">
    <location>
        <begin position="193"/>
        <end position="195"/>
    </location>
</feature>
<feature type="strand" evidence="15">
    <location>
        <begin position="198"/>
        <end position="210"/>
    </location>
</feature>
<feature type="helix" evidence="15">
    <location>
        <begin position="211"/>
        <end position="218"/>
    </location>
</feature>
<feature type="helix" evidence="15">
    <location>
        <begin position="220"/>
        <end position="223"/>
    </location>
</feature>
<feature type="strand" evidence="15">
    <location>
        <begin position="227"/>
        <end position="230"/>
    </location>
</feature>
<feature type="strand" evidence="15">
    <location>
        <begin position="234"/>
        <end position="241"/>
    </location>
</feature>
<feature type="turn" evidence="15">
    <location>
        <begin position="242"/>
        <end position="245"/>
    </location>
</feature>
<feature type="strand" evidence="15">
    <location>
        <begin position="246"/>
        <end position="254"/>
    </location>
</feature>
<feature type="strand" evidence="15">
    <location>
        <begin position="265"/>
        <end position="270"/>
    </location>
</feature>
<feature type="helix" evidence="15">
    <location>
        <begin position="271"/>
        <end position="277"/>
    </location>
</feature>
<feature type="turn" evidence="15">
    <location>
        <begin position="278"/>
        <end position="280"/>
    </location>
</feature>
<feature type="helix" evidence="15">
    <location>
        <begin position="283"/>
        <end position="290"/>
    </location>
</feature>
<feature type="strand" evidence="15">
    <location>
        <begin position="294"/>
        <end position="307"/>
    </location>
</feature>
<feature type="strand" evidence="15">
    <location>
        <begin position="312"/>
        <end position="314"/>
    </location>
</feature>
<feature type="strand" evidence="15">
    <location>
        <begin position="317"/>
        <end position="319"/>
    </location>
</feature>
<feature type="helix" evidence="15">
    <location>
        <begin position="322"/>
        <end position="325"/>
    </location>
</feature>
<feature type="strand" evidence="16">
    <location>
        <begin position="329"/>
        <end position="332"/>
    </location>
</feature>
<feature type="helix" evidence="15">
    <location>
        <begin position="334"/>
        <end position="355"/>
    </location>
</feature>
<feature type="turn" evidence="15">
    <location>
        <begin position="356"/>
        <end position="358"/>
    </location>
</feature>
<feature type="helix" evidence="15">
    <location>
        <begin position="361"/>
        <end position="397"/>
    </location>
</feature>
<feature type="helix" evidence="15">
    <location>
        <begin position="400"/>
        <end position="402"/>
    </location>
</feature>
<feature type="turn" evidence="17">
    <location>
        <begin position="405"/>
        <end position="407"/>
    </location>
</feature>
<feature type="helix" evidence="15">
    <location>
        <begin position="408"/>
        <end position="412"/>
    </location>
</feature>
<feature type="helix" evidence="15">
    <location>
        <begin position="414"/>
        <end position="426"/>
    </location>
</feature>
<feature type="helix" evidence="15">
    <location>
        <begin position="430"/>
        <end position="444"/>
    </location>
</feature>
<protein>
    <recommendedName>
        <fullName evidence="6">FAD-dependent monooxygenase tropB</fullName>
        <ecNumber evidence="3 5">1.-.-.-</ecNumber>
    </recommendedName>
    <alternativeName>
        <fullName evidence="6">Tropolone synthesis protein B</fullName>
    </alternativeName>
</protein>
<proteinExistence type="evidence at protein level"/>
<name>TROPB_TALSN</name>
<keyword id="KW-0002">3D-structure</keyword>
<keyword id="KW-0274">FAD</keyword>
<keyword id="KW-0285">Flavoprotein</keyword>
<keyword id="KW-0325">Glycoprotein</keyword>
<keyword id="KW-0472">Membrane</keyword>
<keyword id="KW-0503">Monooxygenase</keyword>
<keyword id="KW-0560">Oxidoreductase</keyword>
<keyword id="KW-1185">Reference proteome</keyword>
<keyword id="KW-0812">Transmembrane</keyword>
<keyword id="KW-1133">Transmembrane helix</keyword>
<organism>
    <name type="scientific">Talaromyces stipitatus (strain ATCC 10500 / CBS 375.48 / QM 6759 / NRRL 1006)</name>
    <name type="common">Penicillium stipitatum</name>
    <dbReference type="NCBI Taxonomy" id="441959"/>
    <lineage>
        <taxon>Eukaryota</taxon>
        <taxon>Fungi</taxon>
        <taxon>Dikarya</taxon>
        <taxon>Ascomycota</taxon>
        <taxon>Pezizomycotina</taxon>
        <taxon>Eurotiomycetes</taxon>
        <taxon>Eurotiomycetidae</taxon>
        <taxon>Eurotiales</taxon>
        <taxon>Trichocomaceae</taxon>
        <taxon>Talaromyces</taxon>
        <taxon>Talaromyces sect. Talaromyces</taxon>
    </lineage>
</organism>
<accession>B8M9J8</accession>